<feature type="chain" id="PRO_0000301072" description="Peptide deformylase">
    <location>
        <begin position="1"/>
        <end position="181"/>
    </location>
</feature>
<feature type="active site" evidence="1">
    <location>
        <position position="146"/>
    </location>
</feature>
<feature type="binding site" evidence="1">
    <location>
        <position position="103"/>
    </location>
    <ligand>
        <name>Fe cation</name>
        <dbReference type="ChEBI" id="CHEBI:24875"/>
    </ligand>
</feature>
<feature type="binding site" evidence="1">
    <location>
        <position position="145"/>
    </location>
    <ligand>
        <name>Fe cation</name>
        <dbReference type="ChEBI" id="CHEBI:24875"/>
    </ligand>
</feature>
<feature type="binding site" evidence="1">
    <location>
        <position position="149"/>
    </location>
    <ligand>
        <name>Fe cation</name>
        <dbReference type="ChEBI" id="CHEBI:24875"/>
    </ligand>
</feature>
<proteinExistence type="inferred from homology"/>
<organism>
    <name type="scientific">Orientia tsutsugamushi (strain Boryong)</name>
    <name type="common">Rickettsia tsutsugamushi</name>
    <dbReference type="NCBI Taxonomy" id="357244"/>
    <lineage>
        <taxon>Bacteria</taxon>
        <taxon>Pseudomonadati</taxon>
        <taxon>Pseudomonadota</taxon>
        <taxon>Alphaproteobacteria</taxon>
        <taxon>Rickettsiales</taxon>
        <taxon>Rickettsiaceae</taxon>
        <taxon>Rickettsieae</taxon>
        <taxon>Orientia</taxon>
    </lineage>
</organism>
<keyword id="KW-0378">Hydrolase</keyword>
<keyword id="KW-0408">Iron</keyword>
<keyword id="KW-0479">Metal-binding</keyword>
<keyword id="KW-0648">Protein biosynthesis</keyword>
<keyword id="KW-1185">Reference proteome</keyword>
<comment type="function">
    <text evidence="1">Removes the formyl group from the N-terminal Met of newly synthesized proteins. Requires at least a dipeptide for an efficient rate of reaction. N-terminal L-methionine is a prerequisite for activity but the enzyme has broad specificity at other positions.</text>
</comment>
<comment type="catalytic activity">
    <reaction evidence="1">
        <text>N-terminal N-formyl-L-methionyl-[peptide] + H2O = N-terminal L-methionyl-[peptide] + formate</text>
        <dbReference type="Rhea" id="RHEA:24420"/>
        <dbReference type="Rhea" id="RHEA-COMP:10639"/>
        <dbReference type="Rhea" id="RHEA-COMP:10640"/>
        <dbReference type="ChEBI" id="CHEBI:15377"/>
        <dbReference type="ChEBI" id="CHEBI:15740"/>
        <dbReference type="ChEBI" id="CHEBI:49298"/>
        <dbReference type="ChEBI" id="CHEBI:64731"/>
        <dbReference type="EC" id="3.5.1.88"/>
    </reaction>
</comment>
<comment type="cofactor">
    <cofactor evidence="1">
        <name>Fe(2+)</name>
        <dbReference type="ChEBI" id="CHEBI:29033"/>
    </cofactor>
    <text evidence="1">Binds 1 Fe(2+) ion.</text>
</comment>
<comment type="similarity">
    <text evidence="1">Belongs to the polypeptide deformylase family.</text>
</comment>
<sequence>MSILSLVTAPDPILKKVSSPVDTVNDSIRQLIDDMLETMYHNHGVGLAAPQVAVSKRIIVLDLSKVDIEEDNITNSEYKYPLFMVNPIVKAISNQTVTAKEGCLSLPKQAIEVSRYHEIQVTYLDYYNKLKTLNAAGWLARAIQHEVDHLDGILLVDYLSNLKKEATLNTLSKIKDAAYDK</sequence>
<protein>
    <recommendedName>
        <fullName evidence="1">Peptide deformylase</fullName>
        <shortName evidence="1">PDF</shortName>
        <ecNumber evidence="1">3.5.1.88</ecNumber>
    </recommendedName>
    <alternativeName>
        <fullName evidence="1">Polypeptide deformylase</fullName>
    </alternativeName>
</protein>
<gene>
    <name evidence="1" type="primary">def</name>
    <name type="ordered locus">OTBS_1849</name>
</gene>
<name>DEF_ORITB</name>
<accession>A5CF65</accession>
<dbReference type="EC" id="3.5.1.88" evidence="1"/>
<dbReference type="EMBL" id="AM494475">
    <property type="protein sequence ID" value="CAM80944.1"/>
    <property type="molecule type" value="Genomic_DNA"/>
</dbReference>
<dbReference type="RefSeq" id="WP_011945081.1">
    <property type="nucleotide sequence ID" value="NC_009488.1"/>
</dbReference>
<dbReference type="SMR" id="A5CF65"/>
<dbReference type="KEGG" id="ots:OTBS_1849"/>
<dbReference type="eggNOG" id="COG0242">
    <property type="taxonomic scope" value="Bacteria"/>
</dbReference>
<dbReference type="HOGENOM" id="CLU_061901_2_2_5"/>
<dbReference type="Proteomes" id="UP000001565">
    <property type="component" value="Chromosome"/>
</dbReference>
<dbReference type="GO" id="GO:0046872">
    <property type="term" value="F:metal ion binding"/>
    <property type="evidence" value="ECO:0007669"/>
    <property type="project" value="UniProtKB-KW"/>
</dbReference>
<dbReference type="GO" id="GO:0042586">
    <property type="term" value="F:peptide deformylase activity"/>
    <property type="evidence" value="ECO:0007669"/>
    <property type="project" value="UniProtKB-UniRule"/>
</dbReference>
<dbReference type="GO" id="GO:0006412">
    <property type="term" value="P:translation"/>
    <property type="evidence" value="ECO:0007669"/>
    <property type="project" value="UniProtKB-UniRule"/>
</dbReference>
<dbReference type="CDD" id="cd00487">
    <property type="entry name" value="Pep_deformylase"/>
    <property type="match status" value="1"/>
</dbReference>
<dbReference type="Gene3D" id="3.90.45.10">
    <property type="entry name" value="Peptide deformylase"/>
    <property type="match status" value="1"/>
</dbReference>
<dbReference type="HAMAP" id="MF_00163">
    <property type="entry name" value="Pep_deformylase"/>
    <property type="match status" value="1"/>
</dbReference>
<dbReference type="InterPro" id="IPR023635">
    <property type="entry name" value="Peptide_deformylase"/>
</dbReference>
<dbReference type="InterPro" id="IPR036821">
    <property type="entry name" value="Peptide_deformylase_sf"/>
</dbReference>
<dbReference type="NCBIfam" id="TIGR00079">
    <property type="entry name" value="pept_deformyl"/>
    <property type="match status" value="1"/>
</dbReference>
<dbReference type="NCBIfam" id="NF001159">
    <property type="entry name" value="PRK00150.1-3"/>
    <property type="match status" value="1"/>
</dbReference>
<dbReference type="PANTHER" id="PTHR10458">
    <property type="entry name" value="PEPTIDE DEFORMYLASE"/>
    <property type="match status" value="1"/>
</dbReference>
<dbReference type="PANTHER" id="PTHR10458:SF22">
    <property type="entry name" value="PEPTIDE DEFORMYLASE"/>
    <property type="match status" value="1"/>
</dbReference>
<dbReference type="Pfam" id="PF01327">
    <property type="entry name" value="Pep_deformylase"/>
    <property type="match status" value="1"/>
</dbReference>
<dbReference type="PIRSF" id="PIRSF004749">
    <property type="entry name" value="Pep_def"/>
    <property type="match status" value="1"/>
</dbReference>
<dbReference type="PRINTS" id="PR01576">
    <property type="entry name" value="PDEFORMYLASE"/>
</dbReference>
<dbReference type="SUPFAM" id="SSF56420">
    <property type="entry name" value="Peptide deformylase"/>
    <property type="match status" value="1"/>
</dbReference>
<reference key="1">
    <citation type="journal article" date="2007" name="Proc. Natl. Acad. Sci. U.S.A.">
        <title>The Orientia tsutsugamushi genome reveals massive proliferation of conjugative type IV secretion system and host-cell interaction genes.</title>
        <authorList>
            <person name="Cho N.-H."/>
            <person name="Kim H.-R."/>
            <person name="Lee J.-H."/>
            <person name="Kim S.-Y."/>
            <person name="Kim J."/>
            <person name="Cha S."/>
            <person name="Kim S.-Y."/>
            <person name="Darby A.C."/>
            <person name="Fuxelius H.-H."/>
            <person name="Yin J."/>
            <person name="Kim J.H."/>
            <person name="Kim J."/>
            <person name="Lee S.J."/>
            <person name="Koh Y.-S."/>
            <person name="Jang W.-J."/>
            <person name="Park K.-H."/>
            <person name="Andersson S.G.E."/>
            <person name="Choi M.-S."/>
            <person name="Kim I.-S."/>
        </authorList>
    </citation>
    <scope>NUCLEOTIDE SEQUENCE [LARGE SCALE GENOMIC DNA]</scope>
    <source>
        <strain>Boryong</strain>
    </source>
</reference>
<evidence type="ECO:0000255" key="1">
    <source>
        <dbReference type="HAMAP-Rule" id="MF_00163"/>
    </source>
</evidence>